<sequence length="406" mass="45057">MDGWRRMPRWGLLLLLWGSCTFGLPTDTTTFKRIFLKRMPSIRESLKERGVDMARLGPEWSQPMKRLTLGNTTSSVILTNYMDTQYYGEIGIGTPPQTFKVVFDTGSSNVWVPSSKCSRLYTACVYHKLFDASDSSSYKHNGTELTLRYSTGTVSGFLSQDIITVGGITVTQMFGEVTEMPALPFMLAEFDGVVGMGFIEQAIGRVTPIFDNIISQGVLKEDVFSFYYNRDSENSQSLGGQIVLGGSDPQHYEGNFHYINLIKTGVWQIQMKGVSVGSSTLLCEDGCLALVDTGASYISGSTSSIEKLMEALGAKKRLFDYVVKCNEGPTLPDISFHLGGKEYTLTSADYVFQESYSSKKLCTLAIHAMDIPPPTGPTWALGATFIRKFYTEFDRRNNRIGFALAR</sequence>
<comment type="function">
    <text evidence="2 6">Renin is a highly specific endopeptidase, whose only known function is to generate angiotensin I from angiotensinogen in the plasma, initiating a cascade of reactions that produce an elevation of blood pressure and increased sodium retention by the kidney.</text>
</comment>
<comment type="catalytic activity">
    <reaction evidence="2 6">
        <text>Cleavage of Leu-|-Xaa bond in angiotensinogen to generate angiotensin I.</text>
        <dbReference type="EC" id="3.4.23.15"/>
    </reaction>
</comment>
<comment type="activity regulation">
    <text evidence="2">Interaction with ATP6AP2 results in a 5-fold increased efficiency in angiotensinogen processing.</text>
</comment>
<comment type="biophysicochemical properties">
    <kinetics>
        <KM evidence="2">1 uM for angiotensinogen (in absence of ATP6AP2)</KM>
        <KM evidence="2">0.15 uM for angiotensinogen (in presence of membrane-bound ATP6AP2)</KM>
    </kinetics>
</comment>
<comment type="subunit">
    <text evidence="2">Interacts with ATP6AP2.</text>
</comment>
<comment type="interaction">
    <interactant intactId="EBI-715794">
        <id>P00797</id>
    </interactant>
    <interactant intactId="EBI-751728">
        <id>P01019</id>
        <label>AGT</label>
    </interactant>
    <organismsDiffer>false</organismsDiffer>
    <experiments>2</experiments>
</comment>
<comment type="subcellular location">
    <subcellularLocation>
        <location evidence="2">Secreted</location>
    </subcellularLocation>
    <subcellularLocation>
        <location evidence="2">Membrane</location>
    </subcellularLocation>
    <text evidence="2">Associated to membranes via binding to ATP6AP2.</text>
</comment>
<comment type="alternative products">
    <event type="alternative splicing"/>
    <isoform>
        <id>P00797-1</id>
        <name>1</name>
        <sequence type="displayed"/>
    </isoform>
    <isoform>
        <id>P00797-2</id>
        <name>2</name>
        <sequence type="described" ref="VSP_012899"/>
    </isoform>
</comment>
<comment type="disease" evidence="3">
    <disease id="DI-02257">
        <name>Renal tubular dysgenesis</name>
        <acronym>RTD</acronym>
        <description>Autosomal recessive severe disorder of renal tubular development characterized by persistent fetal anuria and perinatal death, probably due to pulmonary hypoplasia from early-onset oligohydramnios (the Potter phenotype).</description>
        <dbReference type="MIM" id="267430"/>
    </disease>
    <text>The disease is caused by variants affecting the gene represented in this entry.</text>
</comment>
<comment type="disease" evidence="4">
    <disease id="DI-02783">
        <name>Tubulointerstitial kidney disease, autosomal dominant 4</name>
        <acronym>ADTKD4</acronym>
        <description>A form of autosomal dominant tubulointerstitial kidney disease, a genetically heterogeneous disorder characterized by slowly progressive loss of kidney function, bland urinary sediment, hyperuricemia, absent or mildly increased albuminuria, lack of severe hypertension during the early stages, and normal or small kidneys on ultrasound. Renal histology shows variable abnormalities including interstitial fibrosis with tubular atrophy, microcystic dilatation of the tubules, thickening of tubular basement membranes, medullary cysts, and secondary glomerulosclerotic or glomerulocystic changes with abnormal glomerular tufting. There is significant variability, as well as incomplete penetrance.</description>
        <dbReference type="MIM" id="613092"/>
    </disease>
    <text>The disease is caused by variants affecting the gene represented in this entry.</text>
</comment>
<comment type="similarity">
    <text evidence="9">Belongs to the peptidase A1 family.</text>
</comment>
<comment type="online information" name="Wikipedia">
    <link uri="https://en.wikipedia.org/wiki/Renin"/>
    <text>Renin entry</text>
</comment>
<proteinExistence type="evidence at protein level"/>
<organism>
    <name type="scientific">Homo sapiens</name>
    <name type="common">Human</name>
    <dbReference type="NCBI Taxonomy" id="9606"/>
    <lineage>
        <taxon>Eukaryota</taxon>
        <taxon>Metazoa</taxon>
        <taxon>Chordata</taxon>
        <taxon>Craniata</taxon>
        <taxon>Vertebrata</taxon>
        <taxon>Euteleostomi</taxon>
        <taxon>Mammalia</taxon>
        <taxon>Eutheria</taxon>
        <taxon>Euarchontoglires</taxon>
        <taxon>Primates</taxon>
        <taxon>Haplorrhini</taxon>
        <taxon>Catarrhini</taxon>
        <taxon>Hominidae</taxon>
        <taxon>Homo</taxon>
    </lineage>
</organism>
<protein>
    <recommendedName>
        <fullName evidence="8">Renin</fullName>
        <ecNumber evidence="2 6">3.4.23.15</ecNumber>
    </recommendedName>
    <alternativeName>
        <fullName>Angiotensinogenase</fullName>
    </alternativeName>
</protein>
<gene>
    <name type="primary">REN</name>
</gene>
<dbReference type="EC" id="3.4.23.15" evidence="2 6"/>
<dbReference type="EMBL" id="L00073">
    <property type="protein sequence ID" value="AAA60363.1"/>
    <property type="molecule type" value="Genomic_DNA"/>
</dbReference>
<dbReference type="EMBL" id="L00064">
    <property type="protein sequence ID" value="AAA60363.1"/>
    <property type="status" value="JOINED"/>
    <property type="molecule type" value="Genomic_DNA"/>
</dbReference>
<dbReference type="EMBL" id="L00065">
    <property type="protein sequence ID" value="AAA60363.1"/>
    <property type="status" value="JOINED"/>
    <property type="molecule type" value="Genomic_DNA"/>
</dbReference>
<dbReference type="EMBL" id="L00066">
    <property type="protein sequence ID" value="AAA60363.1"/>
    <property type="status" value="JOINED"/>
    <property type="molecule type" value="Genomic_DNA"/>
</dbReference>
<dbReference type="EMBL" id="L00067">
    <property type="protein sequence ID" value="AAA60363.1"/>
    <property type="status" value="JOINED"/>
    <property type="molecule type" value="Genomic_DNA"/>
</dbReference>
<dbReference type="EMBL" id="L00068">
    <property type="protein sequence ID" value="AAA60363.1"/>
    <property type="status" value="JOINED"/>
    <property type="molecule type" value="Genomic_DNA"/>
</dbReference>
<dbReference type="EMBL" id="L00069">
    <property type="protein sequence ID" value="AAA60363.1"/>
    <property type="status" value="JOINED"/>
    <property type="molecule type" value="Genomic_DNA"/>
</dbReference>
<dbReference type="EMBL" id="L00070">
    <property type="protein sequence ID" value="AAA60363.1"/>
    <property type="status" value="JOINED"/>
    <property type="molecule type" value="Genomic_DNA"/>
</dbReference>
<dbReference type="EMBL" id="L00071">
    <property type="protein sequence ID" value="AAA60363.1"/>
    <property type="status" value="JOINED"/>
    <property type="molecule type" value="Genomic_DNA"/>
</dbReference>
<dbReference type="EMBL" id="L00072">
    <property type="protein sequence ID" value="AAA60363.1"/>
    <property type="status" value="JOINED"/>
    <property type="molecule type" value="Genomic_DNA"/>
</dbReference>
<dbReference type="EMBL" id="M26901">
    <property type="protein sequence ID" value="AAA60364.1"/>
    <property type="molecule type" value="Genomic_DNA"/>
</dbReference>
<dbReference type="EMBL" id="M26899">
    <property type="protein sequence ID" value="AAA60364.1"/>
    <property type="status" value="JOINED"/>
    <property type="molecule type" value="Genomic_DNA"/>
</dbReference>
<dbReference type="EMBL" id="M26900">
    <property type="protein sequence ID" value="AAA60364.1"/>
    <property type="status" value="JOINED"/>
    <property type="molecule type" value="Genomic_DNA"/>
</dbReference>
<dbReference type="EMBL" id="M10152">
    <property type="protein sequence ID" value="AAD03461.1"/>
    <property type="molecule type" value="Genomic_DNA"/>
</dbReference>
<dbReference type="EMBL" id="M10030">
    <property type="protein sequence ID" value="AAD03461.1"/>
    <property type="status" value="JOINED"/>
    <property type="molecule type" value="Genomic_DNA"/>
</dbReference>
<dbReference type="EMBL" id="M10128">
    <property type="protein sequence ID" value="AAD03461.1"/>
    <property type="status" value="JOINED"/>
    <property type="molecule type" value="Genomic_DNA"/>
</dbReference>
<dbReference type="EMBL" id="M10150">
    <property type="protein sequence ID" value="AAD03461.1"/>
    <property type="status" value="JOINED"/>
    <property type="molecule type" value="Genomic_DNA"/>
</dbReference>
<dbReference type="EMBL" id="M10151">
    <property type="protein sequence ID" value="AAD03461.1"/>
    <property type="status" value="JOINED"/>
    <property type="molecule type" value="Genomic_DNA"/>
</dbReference>
<dbReference type="EMBL" id="AY436324">
    <property type="protein sequence ID" value="AAR03502.1"/>
    <property type="molecule type" value="Genomic_DNA"/>
</dbReference>
<dbReference type="EMBL" id="CR536498">
    <property type="protein sequence ID" value="CAG38737.1"/>
    <property type="molecule type" value="mRNA"/>
</dbReference>
<dbReference type="EMBL" id="EU332871">
    <property type="protein sequence ID" value="ABY87560.1"/>
    <property type="molecule type" value="Genomic_DNA"/>
</dbReference>
<dbReference type="EMBL" id="AL592114">
    <property type="status" value="NOT_ANNOTATED_CDS"/>
    <property type="molecule type" value="Genomic_DNA"/>
</dbReference>
<dbReference type="EMBL" id="AL592146">
    <property type="status" value="NOT_ANNOTATED_CDS"/>
    <property type="molecule type" value="Genomic_DNA"/>
</dbReference>
<dbReference type="EMBL" id="BC033474">
    <property type="protein sequence ID" value="AAH33474.1"/>
    <property type="molecule type" value="mRNA"/>
</dbReference>
<dbReference type="EMBL" id="BC047752">
    <property type="protein sequence ID" value="AAH47752.1"/>
    <property type="molecule type" value="mRNA"/>
</dbReference>
<dbReference type="EMBL" id="M15410">
    <property type="protein sequence ID" value="AAA60263.1"/>
    <property type="molecule type" value="Genomic_DNA"/>
</dbReference>
<dbReference type="EMBL" id="M26440">
    <property type="protein sequence ID" value="AAA60365.1"/>
    <property type="molecule type" value="Genomic_DNA"/>
</dbReference>
<dbReference type="EMBL" id="M13253">
    <property type="protein sequence ID" value="AAA60262.1"/>
    <property type="molecule type" value="Genomic_DNA"/>
</dbReference>
<dbReference type="CCDS" id="CCDS30981.1">
    <molecule id="P00797-1"/>
</dbReference>
<dbReference type="PIR" id="A21454">
    <property type="entry name" value="REHUK"/>
</dbReference>
<dbReference type="RefSeq" id="NP_000528.1">
    <molecule id="P00797-1"/>
    <property type="nucleotide sequence ID" value="NM_000537.4"/>
</dbReference>
<dbReference type="PDB" id="1BBS">
    <property type="method" value="X-ray"/>
    <property type="resolution" value="2.80 A"/>
    <property type="chains" value="A/B=67-406"/>
</dbReference>
<dbReference type="PDB" id="1BIL">
    <property type="method" value="X-ray"/>
    <property type="resolution" value="2.40 A"/>
    <property type="chains" value="A/B=70-406"/>
</dbReference>
<dbReference type="PDB" id="1BIM">
    <property type="method" value="X-ray"/>
    <property type="resolution" value="2.80 A"/>
    <property type="chains" value="A/B=70-406"/>
</dbReference>
<dbReference type="PDB" id="1HRN">
    <property type="method" value="X-ray"/>
    <property type="resolution" value="1.80 A"/>
    <property type="chains" value="A/B=70-406"/>
</dbReference>
<dbReference type="PDB" id="1RNE">
    <property type="method" value="X-ray"/>
    <property type="resolution" value="2.40 A"/>
    <property type="chains" value="A=67-406"/>
</dbReference>
<dbReference type="PDB" id="2BKS">
    <property type="method" value="X-ray"/>
    <property type="resolution" value="2.20 A"/>
    <property type="chains" value="A/B=67-406"/>
</dbReference>
<dbReference type="PDB" id="2BKT">
    <property type="method" value="X-ray"/>
    <property type="resolution" value="2.30 A"/>
    <property type="chains" value="A/B=67-406"/>
</dbReference>
<dbReference type="PDB" id="2FS4">
    <property type="method" value="X-ray"/>
    <property type="resolution" value="2.20 A"/>
    <property type="chains" value="A/B=74-406"/>
</dbReference>
<dbReference type="PDB" id="2G1N">
    <property type="method" value="X-ray"/>
    <property type="resolution" value="2.90 A"/>
    <property type="chains" value="A/B=74-406"/>
</dbReference>
<dbReference type="PDB" id="2G1O">
    <property type="method" value="X-ray"/>
    <property type="resolution" value="2.70 A"/>
    <property type="chains" value="A/B=74-406"/>
</dbReference>
<dbReference type="PDB" id="2G1R">
    <property type="method" value="X-ray"/>
    <property type="resolution" value="2.42 A"/>
    <property type="chains" value="A/B=74-406"/>
</dbReference>
<dbReference type="PDB" id="2G1S">
    <property type="method" value="X-ray"/>
    <property type="resolution" value="2.50 A"/>
    <property type="chains" value="A/B=74-406"/>
</dbReference>
<dbReference type="PDB" id="2G1Y">
    <property type="method" value="X-ray"/>
    <property type="resolution" value="2.50 A"/>
    <property type="chains" value="A/B=74-406"/>
</dbReference>
<dbReference type="PDB" id="2G20">
    <property type="method" value="X-ray"/>
    <property type="resolution" value="2.40 A"/>
    <property type="chains" value="A/B=74-406"/>
</dbReference>
<dbReference type="PDB" id="2G21">
    <property type="method" value="X-ray"/>
    <property type="resolution" value="2.20 A"/>
    <property type="chains" value="A/B=74-406"/>
</dbReference>
<dbReference type="PDB" id="2G22">
    <property type="method" value="X-ray"/>
    <property type="resolution" value="2.50 A"/>
    <property type="chains" value="A/B=74-406"/>
</dbReference>
<dbReference type="PDB" id="2G24">
    <property type="method" value="X-ray"/>
    <property type="resolution" value="1.90 A"/>
    <property type="chains" value="A/B=74-406"/>
</dbReference>
<dbReference type="PDB" id="2G26">
    <property type="method" value="X-ray"/>
    <property type="resolution" value="2.10 A"/>
    <property type="chains" value="A/B=74-406"/>
</dbReference>
<dbReference type="PDB" id="2G27">
    <property type="method" value="X-ray"/>
    <property type="resolution" value="2.90 A"/>
    <property type="chains" value="A/B=74-406"/>
</dbReference>
<dbReference type="PDB" id="2I4Q">
    <property type="method" value="X-ray"/>
    <property type="resolution" value="2.30 A"/>
    <property type="chains" value="A/B=73-406"/>
</dbReference>
<dbReference type="PDB" id="2IKO">
    <property type="method" value="X-ray"/>
    <property type="resolution" value="1.90 A"/>
    <property type="chains" value="A/B=67-406"/>
</dbReference>
<dbReference type="PDB" id="2IKU">
    <property type="method" value="X-ray"/>
    <property type="resolution" value="2.60 A"/>
    <property type="chains" value="A/B=67-406"/>
</dbReference>
<dbReference type="PDB" id="2IL2">
    <property type="method" value="X-ray"/>
    <property type="resolution" value="2.24 A"/>
    <property type="chains" value="A/B=67-406"/>
</dbReference>
<dbReference type="PDB" id="2REN">
    <property type="method" value="X-ray"/>
    <property type="resolution" value="2.50 A"/>
    <property type="chains" value="A=67-406"/>
</dbReference>
<dbReference type="PDB" id="2V0Z">
    <property type="method" value="X-ray"/>
    <property type="resolution" value="2.20 A"/>
    <property type="chains" value="C/O=67-406"/>
</dbReference>
<dbReference type="PDB" id="2V10">
    <property type="method" value="X-ray"/>
    <property type="resolution" value="3.10 A"/>
    <property type="chains" value="C/O=67-406"/>
</dbReference>
<dbReference type="PDB" id="2V11">
    <property type="method" value="X-ray"/>
    <property type="resolution" value="3.10 A"/>
    <property type="chains" value="C/O=67-406"/>
</dbReference>
<dbReference type="PDB" id="2V12">
    <property type="method" value="X-ray"/>
    <property type="resolution" value="3.20 A"/>
    <property type="chains" value="C/O=67-406"/>
</dbReference>
<dbReference type="PDB" id="2V13">
    <property type="method" value="X-ray"/>
    <property type="resolution" value="2.80 A"/>
    <property type="chains" value="A=67-406"/>
</dbReference>
<dbReference type="PDB" id="2V16">
    <property type="method" value="X-ray"/>
    <property type="resolution" value="2.80 A"/>
    <property type="chains" value="C/O=67-406"/>
</dbReference>
<dbReference type="PDB" id="2X0B">
    <property type="method" value="X-ray"/>
    <property type="resolution" value="4.33 A"/>
    <property type="chains" value="A/C/E/G=24-406"/>
</dbReference>
<dbReference type="PDB" id="3D91">
    <property type="method" value="X-ray"/>
    <property type="resolution" value="2.20 A"/>
    <property type="chains" value="A/B=67-406"/>
</dbReference>
<dbReference type="PDB" id="3G6Z">
    <property type="method" value="X-ray"/>
    <property type="resolution" value="2.00 A"/>
    <property type="chains" value="A/B=67-406"/>
</dbReference>
<dbReference type="PDB" id="3G70">
    <property type="method" value="X-ray"/>
    <property type="resolution" value="2.00 A"/>
    <property type="chains" value="A/B=67-406"/>
</dbReference>
<dbReference type="PDB" id="3G72">
    <property type="method" value="X-ray"/>
    <property type="resolution" value="1.90 A"/>
    <property type="chains" value="A/B=67-406"/>
</dbReference>
<dbReference type="PDB" id="3GW5">
    <property type="method" value="X-ray"/>
    <property type="resolution" value="2.00 A"/>
    <property type="chains" value="A/B=70-406"/>
</dbReference>
<dbReference type="PDB" id="3K1W">
    <property type="method" value="X-ray"/>
    <property type="resolution" value="1.50 A"/>
    <property type="chains" value="A/B=67-406"/>
</dbReference>
<dbReference type="PDB" id="3KM4">
    <property type="method" value="X-ray"/>
    <property type="resolution" value="1.90 A"/>
    <property type="chains" value="A/B=70-406"/>
</dbReference>
<dbReference type="PDB" id="3O9L">
    <property type="method" value="X-ray"/>
    <property type="resolution" value="2.40 A"/>
    <property type="chains" value="A/C=67-232, B/D=237-406"/>
</dbReference>
<dbReference type="PDB" id="3OAD">
    <property type="method" value="X-ray"/>
    <property type="resolution" value="2.17 A"/>
    <property type="chains" value="A/C=67-232, B/D=237-406"/>
</dbReference>
<dbReference type="PDB" id="3OAG">
    <property type="method" value="X-ray"/>
    <property type="resolution" value="2.30 A"/>
    <property type="chains" value="A/C=67-232, B/D=237-406"/>
</dbReference>
<dbReference type="PDB" id="3OOT">
    <property type="method" value="X-ray"/>
    <property type="resolution" value="2.55 A"/>
    <property type="chains" value="A/B=67-406"/>
</dbReference>
<dbReference type="PDB" id="3OQF">
    <property type="method" value="X-ray"/>
    <property type="resolution" value="2.78 A"/>
    <property type="chains" value="A/B=67-406"/>
</dbReference>
<dbReference type="PDB" id="3OQK">
    <property type="method" value="X-ray"/>
    <property type="resolution" value="2.90 A"/>
    <property type="chains" value="A/B=67-406"/>
</dbReference>
<dbReference type="PDB" id="3OWN">
    <property type="method" value="X-ray"/>
    <property type="resolution" value="2.00 A"/>
    <property type="chains" value="A/B=67-406"/>
</dbReference>
<dbReference type="PDB" id="3Q3T">
    <property type="method" value="X-ray"/>
    <property type="resolution" value="2.60 A"/>
    <property type="chains" value="A/B=67-406"/>
</dbReference>
<dbReference type="PDB" id="3Q4B">
    <property type="method" value="X-ray"/>
    <property type="resolution" value="2.19 A"/>
    <property type="chains" value="A/B=67-406"/>
</dbReference>
<dbReference type="PDB" id="3Q5H">
    <property type="method" value="X-ray"/>
    <property type="resolution" value="2.16 A"/>
    <property type="chains" value="A/B=67-406"/>
</dbReference>
<dbReference type="PDB" id="3SFC">
    <property type="method" value="X-ray"/>
    <property type="resolution" value="2.10 A"/>
    <property type="chains" value="A/B=67-406"/>
</dbReference>
<dbReference type="PDB" id="3VCM">
    <property type="method" value="X-ray"/>
    <property type="resolution" value="2.93 A"/>
    <property type="chains" value="A/B=67-406, P/Q=24-66"/>
</dbReference>
<dbReference type="PDB" id="3VSW">
    <property type="method" value="X-ray"/>
    <property type="resolution" value="3.00 A"/>
    <property type="chains" value="A/B=67-406"/>
</dbReference>
<dbReference type="PDB" id="3VSX">
    <property type="method" value="X-ray"/>
    <property type="resolution" value="2.80 A"/>
    <property type="chains" value="A/B=67-406"/>
</dbReference>
<dbReference type="PDB" id="3VUC">
    <property type="method" value="X-ray"/>
    <property type="resolution" value="2.60 A"/>
    <property type="chains" value="A/B=67-406"/>
</dbReference>
<dbReference type="PDB" id="3VYD">
    <property type="method" value="X-ray"/>
    <property type="resolution" value="2.81 A"/>
    <property type="chains" value="A/B=67-406"/>
</dbReference>
<dbReference type="PDB" id="3VYE">
    <property type="method" value="X-ray"/>
    <property type="resolution" value="2.70 A"/>
    <property type="chains" value="A/B=67-406"/>
</dbReference>
<dbReference type="PDB" id="3VYF">
    <property type="method" value="X-ray"/>
    <property type="resolution" value="2.80 A"/>
    <property type="chains" value="A/B=67-406"/>
</dbReference>
<dbReference type="PDB" id="4AMT">
    <property type="method" value="X-ray"/>
    <property type="resolution" value="2.60 A"/>
    <property type="chains" value="A=24-406"/>
</dbReference>
<dbReference type="PDB" id="4GJ5">
    <property type="method" value="X-ray"/>
    <property type="resolution" value="2.40 A"/>
    <property type="chains" value="A/B=67-406"/>
</dbReference>
<dbReference type="PDB" id="4GJ6">
    <property type="method" value="X-ray"/>
    <property type="resolution" value="2.58 A"/>
    <property type="chains" value="A/B=67-406"/>
</dbReference>
<dbReference type="PDB" id="4GJ7">
    <property type="method" value="X-ray"/>
    <property type="resolution" value="2.80 A"/>
    <property type="chains" value="A/B=67-406"/>
</dbReference>
<dbReference type="PDB" id="4GJ8">
    <property type="method" value="X-ray"/>
    <property type="resolution" value="2.50 A"/>
    <property type="chains" value="A/B=67-406"/>
</dbReference>
<dbReference type="PDB" id="4GJ9">
    <property type="method" value="X-ray"/>
    <property type="resolution" value="2.60 A"/>
    <property type="chains" value="A/B=67-406"/>
</dbReference>
<dbReference type="PDB" id="4GJA">
    <property type="method" value="X-ray"/>
    <property type="resolution" value="2.60 A"/>
    <property type="chains" value="A/B=67-406"/>
</dbReference>
<dbReference type="PDB" id="4GJB">
    <property type="method" value="X-ray"/>
    <property type="resolution" value="2.75 A"/>
    <property type="chains" value="A/B=67-406"/>
</dbReference>
<dbReference type="PDB" id="4GJC">
    <property type="method" value="X-ray"/>
    <property type="resolution" value="2.40 A"/>
    <property type="chains" value="A/B=67-406"/>
</dbReference>
<dbReference type="PDB" id="4GJD">
    <property type="method" value="X-ray"/>
    <property type="resolution" value="2.65 A"/>
    <property type="chains" value="A/B=67-406"/>
</dbReference>
<dbReference type="PDB" id="4PYV">
    <property type="method" value="X-ray"/>
    <property type="resolution" value="2.65 A"/>
    <property type="chains" value="A/B=67-406"/>
</dbReference>
<dbReference type="PDB" id="4Q1N">
    <property type="method" value="X-ray"/>
    <property type="resolution" value="2.09 A"/>
    <property type="chains" value="A/B=67-406"/>
</dbReference>
<dbReference type="PDB" id="4RYC">
    <property type="method" value="X-ray"/>
    <property type="resolution" value="2.45 A"/>
    <property type="chains" value="A/B=67-406"/>
</dbReference>
<dbReference type="PDB" id="4RYG">
    <property type="method" value="X-ray"/>
    <property type="resolution" value="2.65 A"/>
    <property type="chains" value="A/B=67-406"/>
</dbReference>
<dbReference type="PDB" id="4RZ1">
    <property type="method" value="X-ray"/>
    <property type="resolution" value="2.60 A"/>
    <property type="chains" value="A/B=67-406"/>
</dbReference>
<dbReference type="PDB" id="4S1G">
    <property type="method" value="X-ray"/>
    <property type="resolution" value="2.10 A"/>
    <property type="chains" value="A/B=67-406"/>
</dbReference>
<dbReference type="PDB" id="4XX3">
    <property type="method" value="X-ray"/>
    <property type="resolution" value="2.40 A"/>
    <property type="chains" value="A/B=67-406"/>
</dbReference>
<dbReference type="PDB" id="4XX4">
    <property type="method" value="X-ray"/>
    <property type="resolution" value="2.40 A"/>
    <property type="chains" value="A/B=67-406"/>
</dbReference>
<dbReference type="PDB" id="5KOQ">
    <property type="method" value="X-ray"/>
    <property type="resolution" value="2.70 A"/>
    <property type="chains" value="A/B=70-406"/>
</dbReference>
<dbReference type="PDB" id="5KOS">
    <property type="method" value="X-ray"/>
    <property type="resolution" value="2.41 A"/>
    <property type="chains" value="A/B=70-406"/>
</dbReference>
<dbReference type="PDB" id="5KOT">
    <property type="method" value="X-ray"/>
    <property type="resolution" value="2.10 A"/>
    <property type="chains" value="A/B=70-406"/>
</dbReference>
<dbReference type="PDB" id="5SXN">
    <property type="method" value="X-ray"/>
    <property type="resolution" value="2.10 A"/>
    <property type="chains" value="A/B=68-406"/>
</dbReference>
<dbReference type="PDB" id="5SY2">
    <property type="method" value="X-ray"/>
    <property type="resolution" value="2.25 A"/>
    <property type="chains" value="A/B=67-406"/>
</dbReference>
<dbReference type="PDB" id="5SY3">
    <property type="method" value="X-ray"/>
    <property type="resolution" value="2.30 A"/>
    <property type="chains" value="A/B=68-406"/>
</dbReference>
<dbReference type="PDB" id="5SZ9">
    <property type="method" value="X-ray"/>
    <property type="resolution" value="2.85 A"/>
    <property type="chains" value="A/B=68-406"/>
</dbReference>
<dbReference type="PDB" id="5T4S">
    <property type="method" value="X-ray"/>
    <property type="resolution" value="2.64 A"/>
    <property type="chains" value="A/B=68-406"/>
</dbReference>
<dbReference type="PDB" id="5TMG">
    <property type="method" value="X-ray"/>
    <property type="resolution" value="2.20 A"/>
    <property type="chains" value="A/B=70-406"/>
</dbReference>
<dbReference type="PDB" id="5TMK">
    <property type="method" value="X-ray"/>
    <property type="resolution" value="2.65 A"/>
    <property type="chains" value="A/B=70-406"/>
</dbReference>
<dbReference type="PDB" id="5V8V">
    <property type="method" value="X-ray"/>
    <property type="resolution" value="2.60 A"/>
    <property type="chains" value="A/B=70-406"/>
</dbReference>
<dbReference type="PDB" id="5VPM">
    <property type="method" value="X-ray"/>
    <property type="resolution" value="2.90 A"/>
    <property type="chains" value="A/B=70-406"/>
</dbReference>
<dbReference type="PDB" id="5VRP">
    <property type="method" value="X-ray"/>
    <property type="resolution" value="3.22 A"/>
    <property type="chains" value="A/B=70-406"/>
</dbReference>
<dbReference type="PDB" id="6I3F">
    <property type="method" value="X-ray"/>
    <property type="resolution" value="2.55 A"/>
    <property type="chains" value="B=67-406"/>
</dbReference>
<dbReference type="PDB" id="7XGK">
    <property type="method" value="X-ray"/>
    <property type="resolution" value="2.40 A"/>
    <property type="chains" value="A/B=67-406"/>
</dbReference>
<dbReference type="PDB" id="7XGO">
    <property type="method" value="X-ray"/>
    <property type="resolution" value="2.10 A"/>
    <property type="chains" value="A/B=67-406"/>
</dbReference>
<dbReference type="PDB" id="7XGP">
    <property type="method" value="X-ray"/>
    <property type="resolution" value="2.65 A"/>
    <property type="chains" value="A/B=67-406"/>
</dbReference>
<dbReference type="PDBsum" id="1BBS"/>
<dbReference type="PDBsum" id="1BIL"/>
<dbReference type="PDBsum" id="1BIM"/>
<dbReference type="PDBsum" id="1HRN"/>
<dbReference type="PDBsum" id="1RNE"/>
<dbReference type="PDBsum" id="2BKS"/>
<dbReference type="PDBsum" id="2BKT"/>
<dbReference type="PDBsum" id="2FS4"/>
<dbReference type="PDBsum" id="2G1N"/>
<dbReference type="PDBsum" id="2G1O"/>
<dbReference type="PDBsum" id="2G1R"/>
<dbReference type="PDBsum" id="2G1S"/>
<dbReference type="PDBsum" id="2G1Y"/>
<dbReference type="PDBsum" id="2G20"/>
<dbReference type="PDBsum" id="2G21"/>
<dbReference type="PDBsum" id="2G22"/>
<dbReference type="PDBsum" id="2G24"/>
<dbReference type="PDBsum" id="2G26"/>
<dbReference type="PDBsum" id="2G27"/>
<dbReference type="PDBsum" id="2I4Q"/>
<dbReference type="PDBsum" id="2IKO"/>
<dbReference type="PDBsum" id="2IKU"/>
<dbReference type="PDBsum" id="2IL2"/>
<dbReference type="PDBsum" id="2REN"/>
<dbReference type="PDBsum" id="2V0Z"/>
<dbReference type="PDBsum" id="2V10"/>
<dbReference type="PDBsum" id="2V11"/>
<dbReference type="PDBsum" id="2V12"/>
<dbReference type="PDBsum" id="2V13"/>
<dbReference type="PDBsum" id="2V16"/>
<dbReference type="PDBsum" id="2X0B"/>
<dbReference type="PDBsum" id="3D91"/>
<dbReference type="PDBsum" id="3G6Z"/>
<dbReference type="PDBsum" id="3G70"/>
<dbReference type="PDBsum" id="3G72"/>
<dbReference type="PDBsum" id="3GW5"/>
<dbReference type="PDBsum" id="3K1W"/>
<dbReference type="PDBsum" id="3KM4"/>
<dbReference type="PDBsum" id="3O9L"/>
<dbReference type="PDBsum" id="3OAD"/>
<dbReference type="PDBsum" id="3OAG"/>
<dbReference type="PDBsum" id="3OOT"/>
<dbReference type="PDBsum" id="3OQF"/>
<dbReference type="PDBsum" id="3OQK"/>
<dbReference type="PDBsum" id="3OWN"/>
<dbReference type="PDBsum" id="3Q3T"/>
<dbReference type="PDBsum" id="3Q4B"/>
<dbReference type="PDBsum" id="3Q5H"/>
<dbReference type="PDBsum" id="3SFC"/>
<dbReference type="PDBsum" id="3VCM"/>
<dbReference type="PDBsum" id="3VSW"/>
<dbReference type="PDBsum" id="3VSX"/>
<dbReference type="PDBsum" id="3VUC"/>
<dbReference type="PDBsum" id="3VYD"/>
<dbReference type="PDBsum" id="3VYE"/>
<dbReference type="PDBsum" id="3VYF"/>
<dbReference type="PDBsum" id="4AMT"/>
<dbReference type="PDBsum" id="4GJ5"/>
<dbReference type="PDBsum" id="4GJ6"/>
<dbReference type="PDBsum" id="4GJ7"/>
<dbReference type="PDBsum" id="4GJ8"/>
<dbReference type="PDBsum" id="4GJ9"/>
<dbReference type="PDBsum" id="4GJA"/>
<dbReference type="PDBsum" id="4GJB"/>
<dbReference type="PDBsum" id="4GJC"/>
<dbReference type="PDBsum" id="4GJD"/>
<dbReference type="PDBsum" id="4PYV"/>
<dbReference type="PDBsum" id="4Q1N"/>
<dbReference type="PDBsum" id="4RYC"/>
<dbReference type="PDBsum" id="4RYG"/>
<dbReference type="PDBsum" id="4RZ1"/>
<dbReference type="PDBsum" id="4S1G"/>
<dbReference type="PDBsum" id="4XX3"/>
<dbReference type="PDBsum" id="4XX4"/>
<dbReference type="PDBsum" id="5KOQ"/>
<dbReference type="PDBsum" id="5KOS"/>
<dbReference type="PDBsum" id="5KOT"/>
<dbReference type="PDBsum" id="5SXN"/>
<dbReference type="PDBsum" id="5SY2"/>
<dbReference type="PDBsum" id="5SY3"/>
<dbReference type="PDBsum" id="5SZ9"/>
<dbReference type="PDBsum" id="5T4S"/>
<dbReference type="PDBsum" id="5TMG"/>
<dbReference type="PDBsum" id="5TMK"/>
<dbReference type="PDBsum" id="5V8V"/>
<dbReference type="PDBsum" id="5VPM"/>
<dbReference type="PDBsum" id="5VRP"/>
<dbReference type="PDBsum" id="6I3F"/>
<dbReference type="PDBsum" id="7XGK"/>
<dbReference type="PDBsum" id="7XGO"/>
<dbReference type="PDBsum" id="7XGP"/>
<dbReference type="SMR" id="P00797"/>
<dbReference type="BioGRID" id="111904">
    <property type="interactions" value="11"/>
</dbReference>
<dbReference type="CORUM" id="P00797"/>
<dbReference type="DIP" id="DIP-59219N"/>
<dbReference type="ELM" id="P00797"/>
<dbReference type="FunCoup" id="P00797">
    <property type="interactions" value="56"/>
</dbReference>
<dbReference type="IntAct" id="P00797">
    <property type="interactions" value="10"/>
</dbReference>
<dbReference type="STRING" id="9606.ENSP00000272190"/>
<dbReference type="BindingDB" id="P00797"/>
<dbReference type="ChEMBL" id="CHEMBL286"/>
<dbReference type="DrugBank" id="DB07113">
    <property type="generic name" value="(2S)-6-(2,4-DIAMINO-6-ETHYLPYRIMIDIN-5-YL)-2-(3,5-DIFLUOROPHENYL)-4-(3-METHOXYPROPYL)-2H-1,4-BENZOXAZIN-3(4H)-ONE"/>
</dbReference>
<dbReference type="DrugBank" id="DB04387">
    <property type="generic name" value="1-Hydroxy-2-Amino-3-Cyclohexylpropane"/>
</dbReference>
<dbReference type="DrugBank" id="DB03968">
    <property type="generic name" value="1-Methyl-2-Oxy-5,5-Dimethyl Pyrrolidine"/>
</dbReference>
<dbReference type="DrugBank" id="DB13097">
    <property type="generic name" value="1alpha-Hydroxyvitamin D5"/>
</dbReference>
<dbReference type="DrugBank" id="DB03736">
    <property type="generic name" value="2-Cyclopropylmethylenepropanal"/>
</dbReference>
<dbReference type="DrugBank" id="DB03024">
    <property type="generic name" value="2-Methyl-3-(2-Aminothiazolo)Propanal"/>
</dbReference>
<dbReference type="DrugBank" id="DB02803">
    <property type="generic name" value="3-Phenyl-1,2-Propandiol"/>
</dbReference>
<dbReference type="DrugBank" id="DB07244">
    <property type="generic name" value="5-{4-[(3,5-DIFLUOROBENZYL)AMINO]PHENYL}-6-ETHYLPYRIMIDINE-2,4-DIAMINE"/>
</dbReference>
<dbReference type="DrugBank" id="DB07174">
    <property type="generic name" value="6-(2,4-DIAMINO-6-ETHYLPYRIMIDIN-5-YL)-4-(3-METHOXYPROPYL)-2,2-DIMETHYL-2H-1,4-BENZOXAZIN-3(4H)-ONE"/>
</dbReference>
<dbReference type="DrugBank" id="DB08099">
    <property type="generic name" value="6-ethyl-5-[(2S)-1-(3-methoxypropyl)-2-phenyl-1,2,3,4-tetrahydroquinolin-7-yl]pyrimidine-2,4-diamine"/>
</dbReference>
<dbReference type="DrugBank" id="DB06967">
    <property type="generic name" value="6-ETHYL-5-[9-(3-METHOXYPROPYL)-9H-CARBAZOL-2-YL]PYRIMIDINE-2,4-DIAMINE"/>
</dbReference>
<dbReference type="DrugBank" id="DB09026">
    <property type="generic name" value="Aliskiren"/>
</dbReference>
<dbReference type="DrugBank" id="DB03395">
    <property type="generic name" value="Enalkiren"/>
</dbReference>
<dbReference type="DrugBank" id="DB02296">
    <property type="generic name" value="Isoamyl alcohol"/>
</dbReference>
<dbReference type="DrugBank" id="DB00722">
    <property type="generic name" value="Lisinopril"/>
</dbReference>
<dbReference type="DrugBank" id="DB00350">
    <property type="generic name" value="Minoxidil"/>
</dbReference>
<dbReference type="DrugBank" id="DB01844">
    <property type="generic name" value="N,N-dimethylformamide"/>
</dbReference>
<dbReference type="DrugBank" id="DB04379">
    <property type="generic name" value="N-Methyl-N-(Methylbenzyl)Formamide"/>
</dbReference>
<dbReference type="DrugBank" id="DB06899">
    <property type="generic name" value="N-{2-[6-(2,4-DIAMINO-6-ETHYLPYRIMIDIN-5-YL)-2,2-DIMETHYL-3-OXO-2,3-DIHYDRO-4H-1,4-BENZOTHIAZIN-4-YL]ETHYL}ACETAMIDE"/>
</dbReference>
<dbReference type="DrugBank" id="DB07059">
    <property type="generic name" value="N-{2-[6-(2,4-DIAMINO-6-ETHYLPYRIMIDIN-5-YL)-2,2-DIMETHYL-3-OXO-2,3-DIHYDRO-4H-1,4-BENZOXAZIN-4-YL]ETHYL}ACETAMIDE"/>
</dbReference>
<dbReference type="DrugBank" id="DB00212">
    <property type="generic name" value="Remikiren"/>
</dbReference>
<dbReference type="DrugBank" id="DB05203">
    <property type="generic name" value="SPP1148"/>
</dbReference>
<dbReference type="DrugBank" id="DB12416">
    <property type="generic name" value="VTP-27999"/>
</dbReference>
<dbReference type="DrugCentral" id="P00797"/>
<dbReference type="GuidetoPHARMACOLOGY" id="2413"/>
<dbReference type="MEROPS" id="A01.007"/>
<dbReference type="GlyConnect" id="513">
    <property type="glycosylation" value="19 N-Linked glycans"/>
</dbReference>
<dbReference type="GlyCosmos" id="P00797">
    <property type="glycosylation" value="2 sites, 32 glycans"/>
</dbReference>
<dbReference type="GlyGen" id="P00797">
    <property type="glycosylation" value="4 sites, 32 N-linked glycans (1 site)"/>
</dbReference>
<dbReference type="iPTMnet" id="P00797"/>
<dbReference type="PhosphoSitePlus" id="P00797"/>
<dbReference type="BioMuta" id="REN"/>
<dbReference type="DMDM" id="132326"/>
<dbReference type="MassIVE" id="P00797"/>
<dbReference type="PaxDb" id="9606-ENSP00000272190"/>
<dbReference type="PeptideAtlas" id="P00797"/>
<dbReference type="ProteomicsDB" id="51287">
    <molecule id="P00797-1"/>
</dbReference>
<dbReference type="ProteomicsDB" id="51288">
    <molecule id="P00797-2"/>
</dbReference>
<dbReference type="Antibodypedia" id="1026">
    <property type="antibodies" value="786 antibodies from 40 providers"/>
</dbReference>
<dbReference type="DNASU" id="5972"/>
<dbReference type="Ensembl" id="ENST00000272190.9">
    <molecule id="P00797-1"/>
    <property type="protein sequence ID" value="ENSP00000272190.8"/>
    <property type="gene ID" value="ENSG00000143839.15"/>
</dbReference>
<dbReference type="GeneID" id="5972"/>
<dbReference type="KEGG" id="hsa:5972"/>
<dbReference type="MANE-Select" id="ENST00000272190.9">
    <property type="protein sequence ID" value="ENSP00000272190.8"/>
    <property type="RefSeq nucleotide sequence ID" value="NM_000537.4"/>
    <property type="RefSeq protein sequence ID" value="NP_000528.1"/>
</dbReference>
<dbReference type="UCSC" id="uc001haq.3">
    <molecule id="P00797-1"/>
    <property type="organism name" value="human"/>
</dbReference>
<dbReference type="AGR" id="HGNC:9958"/>
<dbReference type="CTD" id="5972"/>
<dbReference type="DisGeNET" id="5972"/>
<dbReference type="GeneCards" id="REN"/>
<dbReference type="GeneReviews" id="REN"/>
<dbReference type="HGNC" id="HGNC:9958">
    <property type="gene designation" value="REN"/>
</dbReference>
<dbReference type="HPA" id="ENSG00000143839">
    <property type="expression patterns" value="Tissue enriched (kidney)"/>
</dbReference>
<dbReference type="MalaCards" id="REN"/>
<dbReference type="MIM" id="179820">
    <property type="type" value="gene"/>
</dbReference>
<dbReference type="MIM" id="267430">
    <property type="type" value="phenotype"/>
</dbReference>
<dbReference type="MIM" id="613092">
    <property type="type" value="phenotype"/>
</dbReference>
<dbReference type="neXtProt" id="NX_P00797"/>
<dbReference type="OpenTargets" id="ENSG00000143839"/>
<dbReference type="Orphanet" id="217330">
    <property type="disease" value="REN-related autosomal dominant tubulointerstitial kidney disease"/>
</dbReference>
<dbReference type="Orphanet" id="97369">
    <property type="disease" value="Renal tubular dysgenesis of genetic origin"/>
</dbReference>
<dbReference type="PharmGKB" id="PA297"/>
<dbReference type="VEuPathDB" id="HostDB:ENSG00000143839"/>
<dbReference type="eggNOG" id="KOG1339">
    <property type="taxonomic scope" value="Eukaryota"/>
</dbReference>
<dbReference type="GeneTree" id="ENSGT00940000157898"/>
<dbReference type="HOGENOM" id="CLU_013253_3_3_1"/>
<dbReference type="InParanoid" id="P00797"/>
<dbReference type="OMA" id="DMQYYGE"/>
<dbReference type="OrthoDB" id="771136at2759"/>
<dbReference type="PAN-GO" id="P00797">
    <property type="GO annotations" value="3 GO annotations based on evolutionary models"/>
</dbReference>
<dbReference type="PhylomeDB" id="P00797"/>
<dbReference type="TreeFam" id="TF314990"/>
<dbReference type="BRENDA" id="3.4.23.15">
    <property type="organism ID" value="2681"/>
</dbReference>
<dbReference type="PathwayCommons" id="P00797"/>
<dbReference type="Reactome" id="R-HSA-2022377">
    <property type="pathway name" value="Metabolism of Angiotensinogen to Angiotensins"/>
</dbReference>
<dbReference type="SignaLink" id="P00797"/>
<dbReference type="SIGNOR" id="P00797"/>
<dbReference type="BioGRID-ORCS" id="5972">
    <property type="hits" value="13 hits in 1154 CRISPR screens"/>
</dbReference>
<dbReference type="EvolutionaryTrace" id="P00797"/>
<dbReference type="GeneWiki" id="Renin"/>
<dbReference type="GenomeRNAi" id="5972"/>
<dbReference type="Pharos" id="P00797">
    <property type="development level" value="Tclin"/>
</dbReference>
<dbReference type="PRO" id="PR:P00797"/>
<dbReference type="Proteomes" id="UP000005640">
    <property type="component" value="Chromosome 1"/>
</dbReference>
<dbReference type="RNAct" id="P00797">
    <property type="molecule type" value="protein"/>
</dbReference>
<dbReference type="Bgee" id="ENSG00000143839">
    <property type="expression patterns" value="Expressed in decidua and 81 other cell types or tissues"/>
</dbReference>
<dbReference type="ExpressionAtlas" id="P00797">
    <property type="expression patterns" value="baseline and differential"/>
</dbReference>
<dbReference type="GO" id="GO:0045177">
    <property type="term" value="C:apical part of cell"/>
    <property type="evidence" value="ECO:0000314"/>
    <property type="project" value="BHF-UCL"/>
</dbReference>
<dbReference type="GO" id="GO:0005576">
    <property type="term" value="C:extracellular region"/>
    <property type="evidence" value="ECO:0000304"/>
    <property type="project" value="Reactome"/>
</dbReference>
<dbReference type="GO" id="GO:0005615">
    <property type="term" value="C:extracellular space"/>
    <property type="evidence" value="ECO:0000314"/>
    <property type="project" value="HGNC-UCL"/>
</dbReference>
<dbReference type="GO" id="GO:0005886">
    <property type="term" value="C:plasma membrane"/>
    <property type="evidence" value="ECO:0000304"/>
    <property type="project" value="Reactome"/>
</dbReference>
<dbReference type="GO" id="GO:0004190">
    <property type="term" value="F:aspartic-type endopeptidase activity"/>
    <property type="evidence" value="ECO:0000314"/>
    <property type="project" value="UniProt"/>
</dbReference>
<dbReference type="GO" id="GO:0005159">
    <property type="term" value="F:insulin-like growth factor receptor binding"/>
    <property type="evidence" value="ECO:0007669"/>
    <property type="project" value="Ensembl"/>
</dbReference>
<dbReference type="GO" id="GO:0008233">
    <property type="term" value="F:peptidase activity"/>
    <property type="evidence" value="ECO:0000314"/>
    <property type="project" value="HGNC-UCL"/>
</dbReference>
<dbReference type="GO" id="GO:0005102">
    <property type="term" value="F:signaling receptor binding"/>
    <property type="evidence" value="ECO:0000353"/>
    <property type="project" value="HGNC-UCL"/>
</dbReference>
<dbReference type="GO" id="GO:0050435">
    <property type="term" value="P:amyloid-beta metabolic process"/>
    <property type="evidence" value="ECO:0007669"/>
    <property type="project" value="Ensembl"/>
</dbReference>
<dbReference type="GO" id="GO:0002003">
    <property type="term" value="P:angiotensin maturation"/>
    <property type="evidence" value="ECO:0000314"/>
    <property type="project" value="HGNC-UCL"/>
</dbReference>
<dbReference type="GO" id="GO:0048469">
    <property type="term" value="P:cell maturation"/>
    <property type="evidence" value="ECO:0007669"/>
    <property type="project" value="Ensembl"/>
</dbReference>
<dbReference type="GO" id="GO:0071466">
    <property type="term" value="P:cellular response to xenobiotic stimulus"/>
    <property type="evidence" value="ECO:0007669"/>
    <property type="project" value="Ensembl"/>
</dbReference>
<dbReference type="GO" id="GO:0042756">
    <property type="term" value="P:drinking behavior"/>
    <property type="evidence" value="ECO:0007669"/>
    <property type="project" value="Ensembl"/>
</dbReference>
<dbReference type="GO" id="GO:0009755">
    <property type="term" value="P:hormone-mediated signaling pathway"/>
    <property type="evidence" value="ECO:0007669"/>
    <property type="project" value="Ensembl"/>
</dbReference>
<dbReference type="GO" id="GO:0072051">
    <property type="term" value="P:juxtaglomerular apparatus development"/>
    <property type="evidence" value="ECO:0007669"/>
    <property type="project" value="Ensembl"/>
</dbReference>
<dbReference type="GO" id="GO:0001822">
    <property type="term" value="P:kidney development"/>
    <property type="evidence" value="ECO:0000315"/>
    <property type="project" value="BHF-UCL"/>
</dbReference>
<dbReference type="GO" id="GO:0008584">
    <property type="term" value="P:male gonad development"/>
    <property type="evidence" value="ECO:0007669"/>
    <property type="project" value="Ensembl"/>
</dbReference>
<dbReference type="GO" id="GO:0001823">
    <property type="term" value="P:mesonephros development"/>
    <property type="evidence" value="ECO:0007669"/>
    <property type="project" value="Ensembl"/>
</dbReference>
<dbReference type="GO" id="GO:0006508">
    <property type="term" value="P:proteolysis"/>
    <property type="evidence" value="ECO:0000314"/>
    <property type="project" value="HGNC-UCL"/>
</dbReference>
<dbReference type="GO" id="GO:0008217">
    <property type="term" value="P:regulation of blood pressure"/>
    <property type="evidence" value="ECO:0000304"/>
    <property type="project" value="ProtInc"/>
</dbReference>
<dbReference type="GO" id="GO:0043408">
    <property type="term" value="P:regulation of MAPK cascade"/>
    <property type="evidence" value="ECO:0000314"/>
    <property type="project" value="HGNC-UCL"/>
</dbReference>
<dbReference type="GO" id="GO:0002018">
    <property type="term" value="P:renin-angiotensin regulation of aldosterone production"/>
    <property type="evidence" value="ECO:0007669"/>
    <property type="project" value="Ensembl"/>
</dbReference>
<dbReference type="GO" id="GO:0051591">
    <property type="term" value="P:response to cAMP"/>
    <property type="evidence" value="ECO:0007669"/>
    <property type="project" value="Ensembl"/>
</dbReference>
<dbReference type="GO" id="GO:0070305">
    <property type="term" value="P:response to cGMP"/>
    <property type="evidence" value="ECO:0007669"/>
    <property type="project" value="Ensembl"/>
</dbReference>
<dbReference type="GO" id="GO:0035902">
    <property type="term" value="P:response to immobilization stress"/>
    <property type="evidence" value="ECO:0007669"/>
    <property type="project" value="Ensembl"/>
</dbReference>
<dbReference type="GO" id="GO:0032496">
    <property type="term" value="P:response to lipopolysaccharide"/>
    <property type="evidence" value="ECO:0007669"/>
    <property type="project" value="Ensembl"/>
</dbReference>
<dbReference type="CDD" id="cd05487">
    <property type="entry name" value="renin_like"/>
    <property type="match status" value="1"/>
</dbReference>
<dbReference type="FunFam" id="2.40.70.10:FF:000037">
    <property type="entry name" value="Renin"/>
    <property type="match status" value="1"/>
</dbReference>
<dbReference type="FunFam" id="2.40.70.10:FF:000032">
    <property type="entry name" value="renin"/>
    <property type="match status" value="1"/>
</dbReference>
<dbReference type="Gene3D" id="2.40.70.10">
    <property type="entry name" value="Acid Proteases"/>
    <property type="match status" value="2"/>
</dbReference>
<dbReference type="InterPro" id="IPR001461">
    <property type="entry name" value="Aspartic_peptidase_A1"/>
</dbReference>
<dbReference type="InterPro" id="IPR001969">
    <property type="entry name" value="Aspartic_peptidase_AS"/>
</dbReference>
<dbReference type="InterPro" id="IPR012848">
    <property type="entry name" value="Aspartic_peptidase_N"/>
</dbReference>
<dbReference type="InterPro" id="IPR033121">
    <property type="entry name" value="PEPTIDASE_A1"/>
</dbReference>
<dbReference type="InterPro" id="IPR021109">
    <property type="entry name" value="Peptidase_aspartic_dom_sf"/>
</dbReference>
<dbReference type="InterPro" id="IPR034135">
    <property type="entry name" value="Renin-like_dom"/>
</dbReference>
<dbReference type="PANTHER" id="PTHR47966">
    <property type="entry name" value="BETA-SITE APP-CLEAVING ENZYME, ISOFORM A-RELATED"/>
    <property type="match status" value="1"/>
</dbReference>
<dbReference type="PANTHER" id="PTHR47966:SF24">
    <property type="entry name" value="RENIN"/>
    <property type="match status" value="1"/>
</dbReference>
<dbReference type="Pfam" id="PF07966">
    <property type="entry name" value="A1_Propeptide"/>
    <property type="match status" value="1"/>
</dbReference>
<dbReference type="Pfam" id="PF00026">
    <property type="entry name" value="Asp"/>
    <property type="match status" value="1"/>
</dbReference>
<dbReference type="PRINTS" id="PR00792">
    <property type="entry name" value="PEPSIN"/>
</dbReference>
<dbReference type="SUPFAM" id="SSF50630">
    <property type="entry name" value="Acid proteases"/>
    <property type="match status" value="1"/>
</dbReference>
<dbReference type="PROSITE" id="PS00141">
    <property type="entry name" value="ASP_PROTEASE"/>
    <property type="match status" value="2"/>
</dbReference>
<dbReference type="PROSITE" id="PS51767">
    <property type="entry name" value="PEPTIDASE_A1"/>
    <property type="match status" value="1"/>
</dbReference>
<feature type="signal peptide" evidence="5">
    <location>
        <begin position="1"/>
        <end position="23"/>
    </location>
</feature>
<feature type="propeptide" id="PRO_0000026081" description="Activation peptide" evidence="5">
    <location>
        <begin position="24"/>
        <end position="66"/>
    </location>
</feature>
<feature type="chain" id="PRO_0000026082" description="Renin">
    <location>
        <begin position="67"/>
        <end position="406"/>
    </location>
</feature>
<feature type="domain" description="Peptidase A1" evidence="1">
    <location>
        <begin position="86"/>
        <end position="403"/>
    </location>
</feature>
<feature type="active site" evidence="6">
    <location>
        <position position="104"/>
    </location>
</feature>
<feature type="active site" evidence="6">
    <location>
        <position position="292"/>
    </location>
</feature>
<feature type="glycosylation site" description="N-linked (GlcNAc...) asparagine" evidence="7">
    <location>
        <position position="71"/>
    </location>
</feature>
<feature type="glycosylation site" description="N-linked (GlcNAc...) asparagine" evidence="7">
    <location>
        <position position="141"/>
    </location>
</feature>
<feature type="disulfide bond" evidence="6">
    <location>
        <begin position="117"/>
        <end position="124"/>
    </location>
</feature>
<feature type="disulfide bond" evidence="6">
    <location>
        <begin position="283"/>
        <end position="287"/>
    </location>
</feature>
<feature type="disulfide bond" evidence="6">
    <location>
        <begin position="325"/>
        <end position="362"/>
    </location>
</feature>
<feature type="splice variant" id="VSP_012899" description="In isoform 2." evidence="9">
    <location>
        <begin position="231"/>
        <end position="233"/>
    </location>
</feature>
<feature type="sequence variant" id="VAR_063770" description="In ADTKD4; affects ER translocation and processing of nascent preprorenin, resulting in abolished prorenin and renin biosynthesis and secretion; dbSNP:rs121917743." evidence="4">
    <original>L</original>
    <variation>R</variation>
    <location>
        <position position="16"/>
    </location>
</feature>
<feature type="sequence variant" id="VAR_020375" description="In dbSNP:rs11571098.">
    <original>R</original>
    <variation>W</variation>
    <location>
        <position position="33"/>
    </location>
</feature>
<feature type="sequence variant" id="VAR_035088" description="In RTD; dbSNP:rs868694193." evidence="3">
    <original>D</original>
    <variation>N</variation>
    <location>
        <position position="104"/>
    </location>
</feature>
<feature type="sequence variant" id="VAR_029171" description="In dbSNP:rs11571083.">
    <original>Q</original>
    <variation>K</variation>
    <location>
        <position position="160"/>
    </location>
</feature>
<feature type="sequence variant" id="VAR_020376" description="In dbSNP:rs11571117.">
    <original>G</original>
    <variation>R</variation>
    <location>
        <position position="217"/>
    </location>
</feature>
<feature type="sequence variant" id="VAR_035087" description="In RTD; dbSNP:rs121917742." evidence="3">
    <original>R</original>
    <variation>K</variation>
    <location>
        <position position="230"/>
    </location>
</feature>
<feature type="sequence conflict" description="In Ref. 2; AAA60364." evidence="9" ref="2">
    <original>R</original>
    <variation>S</variation>
    <location>
        <position position="55"/>
    </location>
</feature>
<feature type="sequence conflict" description="In Ref. 2; AAA60364." evidence="9" ref="2">
    <original>E</original>
    <variation>Q</variation>
    <location>
        <position position="189"/>
    </location>
</feature>
<feature type="sequence conflict" description="In Ref. 2; AAA60364." evidence="9" ref="2">
    <original>S</original>
    <variation>C</variation>
    <location>
        <position position="304"/>
    </location>
</feature>
<feature type="sequence conflict" description="In Ref. 9." evidence="9" ref="9">
    <original>V</original>
    <variation>I</variation>
    <location>
        <position position="351"/>
    </location>
</feature>
<feature type="strand" evidence="16">
    <location>
        <begin position="33"/>
        <end position="35"/>
    </location>
</feature>
<feature type="helix" evidence="16">
    <location>
        <begin position="42"/>
        <end position="49"/>
    </location>
</feature>
<feature type="helix" evidence="15">
    <location>
        <begin position="53"/>
        <end position="56"/>
    </location>
</feature>
<feature type="strand" evidence="15">
    <location>
        <begin position="59"/>
        <end position="61"/>
    </location>
</feature>
<feature type="strand" evidence="13">
    <location>
        <begin position="74"/>
        <end position="81"/>
    </location>
</feature>
<feature type="turn" evidence="13">
    <location>
        <begin position="82"/>
        <end position="84"/>
    </location>
</feature>
<feature type="strand" evidence="13">
    <location>
        <begin position="85"/>
        <end position="92"/>
    </location>
</feature>
<feature type="turn" evidence="13">
    <location>
        <begin position="93"/>
        <end position="96"/>
    </location>
</feature>
<feature type="strand" evidence="13">
    <location>
        <begin position="97"/>
        <end position="104"/>
    </location>
</feature>
<feature type="strand" evidence="13">
    <location>
        <begin position="110"/>
        <end position="114"/>
    </location>
</feature>
<feature type="helix" evidence="16">
    <location>
        <begin position="119"/>
        <end position="121"/>
    </location>
</feature>
<feature type="helix" evidence="13">
    <location>
        <begin position="122"/>
        <end position="125"/>
    </location>
</feature>
<feature type="helix" evidence="13">
    <location>
        <begin position="132"/>
        <end position="134"/>
    </location>
</feature>
<feature type="strand" evidence="13">
    <location>
        <begin position="139"/>
        <end position="149"/>
    </location>
</feature>
<feature type="strand" evidence="13">
    <location>
        <begin position="152"/>
        <end position="165"/>
    </location>
</feature>
<feature type="strand" evidence="13">
    <location>
        <begin position="168"/>
        <end position="179"/>
    </location>
</feature>
<feature type="helix" evidence="13">
    <location>
        <begin position="182"/>
        <end position="185"/>
    </location>
</feature>
<feature type="strand" evidence="13">
    <location>
        <begin position="189"/>
        <end position="195"/>
    </location>
</feature>
<feature type="helix" evidence="13">
    <location>
        <begin position="199"/>
        <end position="201"/>
    </location>
</feature>
<feature type="helix" evidence="13">
    <location>
        <begin position="203"/>
        <end position="205"/>
    </location>
</feature>
<feature type="helix" evidence="13">
    <location>
        <begin position="209"/>
        <end position="215"/>
    </location>
</feature>
<feature type="strand" evidence="13">
    <location>
        <begin position="219"/>
        <end position="228"/>
    </location>
</feature>
<feature type="strand" evidence="12">
    <location>
        <begin position="233"/>
        <end position="236"/>
    </location>
</feature>
<feature type="strand" evidence="13">
    <location>
        <begin position="240"/>
        <end position="246"/>
    </location>
</feature>
<feature type="helix" evidence="13">
    <location>
        <begin position="249"/>
        <end position="251"/>
    </location>
</feature>
<feature type="strand" evidence="13">
    <location>
        <begin position="252"/>
        <end position="260"/>
    </location>
</feature>
<feature type="strand" evidence="10">
    <location>
        <begin position="262"/>
        <end position="266"/>
    </location>
</feature>
<feature type="strand" evidence="13">
    <location>
        <begin position="268"/>
        <end position="271"/>
    </location>
</feature>
<feature type="strand" evidence="13">
    <location>
        <begin position="274"/>
        <end position="276"/>
    </location>
</feature>
<feature type="strand" evidence="13">
    <location>
        <begin position="279"/>
        <end position="282"/>
    </location>
</feature>
<feature type="turn" evidence="11">
    <location>
        <begin position="284"/>
        <end position="286"/>
    </location>
</feature>
<feature type="strand" evidence="13">
    <location>
        <begin position="287"/>
        <end position="291"/>
    </location>
</feature>
<feature type="strand" evidence="13">
    <location>
        <begin position="296"/>
        <end position="300"/>
    </location>
</feature>
<feature type="helix" evidence="13">
    <location>
        <begin position="302"/>
        <end position="312"/>
    </location>
</feature>
<feature type="strand" evidence="14">
    <location>
        <begin position="315"/>
        <end position="317"/>
    </location>
</feature>
<feature type="strand" evidence="11">
    <location>
        <begin position="318"/>
        <end position="320"/>
    </location>
</feature>
<feature type="strand" evidence="13">
    <location>
        <begin position="321"/>
        <end position="324"/>
    </location>
</feature>
<feature type="helix" evidence="13">
    <location>
        <begin position="325"/>
        <end position="330"/>
    </location>
</feature>
<feature type="strand" evidence="13">
    <location>
        <begin position="334"/>
        <end position="338"/>
    </location>
</feature>
<feature type="strand" evidence="13">
    <location>
        <begin position="341"/>
        <end position="345"/>
    </location>
</feature>
<feature type="helix" evidence="13">
    <location>
        <begin position="347"/>
        <end position="350"/>
    </location>
</feature>
<feature type="strand" evidence="13">
    <location>
        <begin position="360"/>
        <end position="368"/>
    </location>
</feature>
<feature type="turn" evidence="13">
    <location>
        <begin position="373"/>
        <end position="375"/>
    </location>
</feature>
<feature type="strand" evidence="13">
    <location>
        <begin position="379"/>
        <end position="381"/>
    </location>
</feature>
<feature type="helix" evidence="13">
    <location>
        <begin position="383"/>
        <end position="386"/>
    </location>
</feature>
<feature type="strand" evidence="13">
    <location>
        <begin position="389"/>
        <end position="394"/>
    </location>
</feature>
<feature type="turn" evidence="13">
    <location>
        <begin position="395"/>
        <end position="398"/>
    </location>
</feature>
<feature type="strand" evidence="13">
    <location>
        <begin position="399"/>
        <end position="405"/>
    </location>
</feature>
<keyword id="KW-0002">3D-structure</keyword>
<keyword id="KW-0025">Alternative splicing</keyword>
<keyword id="KW-0064">Aspartyl protease</keyword>
<keyword id="KW-0165">Cleavage on pair of basic residues</keyword>
<keyword id="KW-0903">Direct protein sequencing</keyword>
<keyword id="KW-0225">Disease variant</keyword>
<keyword id="KW-1015">Disulfide bond</keyword>
<keyword id="KW-0325">Glycoprotein</keyword>
<keyword id="KW-0378">Hydrolase</keyword>
<keyword id="KW-0472">Membrane</keyword>
<keyword id="KW-0645">Protease</keyword>
<keyword id="KW-1267">Proteomics identification</keyword>
<keyword id="KW-1185">Reference proteome</keyword>
<keyword id="KW-0964">Secreted</keyword>
<keyword id="KW-0732">Signal</keyword>
<keyword id="KW-0865">Zymogen</keyword>
<accession>P00797</accession>
<accession>Q6FI38</accession>
<accession>Q6T5C2</accession>
<evidence type="ECO:0000255" key="1">
    <source>
        <dbReference type="PROSITE-ProRule" id="PRU01103"/>
    </source>
</evidence>
<evidence type="ECO:0000269" key="2">
    <source>
    </source>
</evidence>
<evidence type="ECO:0000269" key="3">
    <source>
    </source>
</evidence>
<evidence type="ECO:0000269" key="4">
    <source>
    </source>
</evidence>
<evidence type="ECO:0000269" key="5">
    <source>
    </source>
</evidence>
<evidence type="ECO:0000269" key="6">
    <source>
    </source>
</evidence>
<evidence type="ECO:0000269" key="7">
    <source>
    </source>
</evidence>
<evidence type="ECO:0000303" key="8">
    <source>
    </source>
</evidence>
<evidence type="ECO:0000305" key="9"/>
<evidence type="ECO:0007829" key="10">
    <source>
        <dbReference type="PDB" id="1BBS"/>
    </source>
</evidence>
<evidence type="ECO:0007829" key="11">
    <source>
        <dbReference type="PDB" id="2G27"/>
    </source>
</evidence>
<evidence type="ECO:0007829" key="12">
    <source>
        <dbReference type="PDB" id="3GW5"/>
    </source>
</evidence>
<evidence type="ECO:0007829" key="13">
    <source>
        <dbReference type="PDB" id="3K1W"/>
    </source>
</evidence>
<evidence type="ECO:0007829" key="14">
    <source>
        <dbReference type="PDB" id="3SFC"/>
    </source>
</evidence>
<evidence type="ECO:0007829" key="15">
    <source>
        <dbReference type="PDB" id="3VCM"/>
    </source>
</evidence>
<evidence type="ECO:0007829" key="16">
    <source>
        <dbReference type="PDB" id="4AMT"/>
    </source>
</evidence>
<name>RENI_HUMAN</name>
<reference key="1">
    <citation type="journal article" date="1983" name="Proc. Natl. Acad. Sci. U.S.A.">
        <title>Cloning and sequence analysis of cDNA for human renin precursor.</title>
        <authorList>
            <person name="Imai T."/>
            <person name="Miyazaki H."/>
            <person name="Hirose S."/>
            <person name="Hori H."/>
            <person name="Hayashi T."/>
            <person name="Kageyama R."/>
            <person name="Ohkubo H."/>
            <person name="Nakanishi S."/>
            <person name="Murakami K."/>
        </authorList>
    </citation>
    <scope>NUCLEOTIDE SEQUENCE [GENOMIC DNA] (ISOFORM 1)</scope>
</reference>
<reference key="2">
    <citation type="journal article" date="1986" name="Clin. Sci.">
        <title>New possibilities for intracellular renin and inactive renin now that the structure of the human renin gene has been elucidated.</title>
        <authorList>
            <person name="Morris B.J."/>
        </authorList>
    </citation>
    <scope>NUCLEOTIDE SEQUENCE [GENOMIC DNA] (ISOFORM 2)</scope>
</reference>
<reference key="3">
    <citation type="journal article" date="1984" name="DNA">
        <title>Primary structure of the human renin gene.</title>
        <authorList>
            <person name="Hardman J.A."/>
            <person name="Hort Y.J."/>
            <person name="Catanzaro D.F."/>
            <person name="Tellam J.T."/>
            <person name="Baxter J.D."/>
            <person name="Morris B.J."/>
            <person name="Shine J."/>
        </authorList>
    </citation>
    <scope>NUCLEOTIDE SEQUENCE [GENOMIC DNA]</scope>
    <source>
        <tissue>Fetal liver</tissue>
    </source>
</reference>
<reference key="4">
    <citation type="submission" date="2003-10" db="EMBL/GenBank/DDBJ databases">
        <authorList>
            <person name="Rieder M.J."/>
            <person name="da Ponte S.H."/>
            <person name="Kuldanek S.A."/>
            <person name="Rajkumar N."/>
            <person name="Smith J.D."/>
            <person name="Toth E.J."/>
            <person name="Krauss R.M."/>
            <person name="Nickerson D.A."/>
        </authorList>
    </citation>
    <scope>NUCLEOTIDE SEQUENCE [GENOMIC DNA]</scope>
</reference>
<reference key="5">
    <citation type="submission" date="2004-06" db="EMBL/GenBank/DDBJ databases">
        <title>Cloning of human full open reading frames in Gateway(TM) system entry vector (pDONR201).</title>
        <authorList>
            <person name="Ebert L."/>
            <person name="Schick M."/>
            <person name="Neubert P."/>
            <person name="Schatten R."/>
            <person name="Henze S."/>
            <person name="Korn B."/>
        </authorList>
    </citation>
    <scope>NUCLEOTIDE SEQUENCE [LARGE SCALE MRNA] (ISOFORM 1)</scope>
</reference>
<reference key="6">
    <citation type="submission" date="2007-12" db="EMBL/GenBank/DDBJ databases">
        <authorList>
            <consortium name="NIEHS SNPs program"/>
        </authorList>
    </citation>
    <scope>NUCLEOTIDE SEQUENCE [GENOMIC DNA]</scope>
</reference>
<reference key="7">
    <citation type="journal article" date="2006" name="Nature">
        <title>The DNA sequence and biological annotation of human chromosome 1.</title>
        <authorList>
            <person name="Gregory S.G."/>
            <person name="Barlow K.F."/>
            <person name="McLay K.E."/>
            <person name="Kaul R."/>
            <person name="Swarbreck D."/>
            <person name="Dunham A."/>
            <person name="Scott C.E."/>
            <person name="Howe K.L."/>
            <person name="Woodfine K."/>
            <person name="Spencer C.C.A."/>
            <person name="Jones M.C."/>
            <person name="Gillson C."/>
            <person name="Searle S."/>
            <person name="Zhou Y."/>
            <person name="Kokocinski F."/>
            <person name="McDonald L."/>
            <person name="Evans R."/>
            <person name="Phillips K."/>
            <person name="Atkinson A."/>
            <person name="Cooper R."/>
            <person name="Jones C."/>
            <person name="Hall R.E."/>
            <person name="Andrews T.D."/>
            <person name="Lloyd C."/>
            <person name="Ainscough R."/>
            <person name="Almeida J.P."/>
            <person name="Ambrose K.D."/>
            <person name="Anderson F."/>
            <person name="Andrew R.W."/>
            <person name="Ashwell R.I.S."/>
            <person name="Aubin K."/>
            <person name="Babbage A.K."/>
            <person name="Bagguley C.L."/>
            <person name="Bailey J."/>
            <person name="Beasley H."/>
            <person name="Bethel G."/>
            <person name="Bird C.P."/>
            <person name="Bray-Allen S."/>
            <person name="Brown J.Y."/>
            <person name="Brown A.J."/>
            <person name="Buckley D."/>
            <person name="Burton J."/>
            <person name="Bye J."/>
            <person name="Carder C."/>
            <person name="Chapman J.C."/>
            <person name="Clark S.Y."/>
            <person name="Clarke G."/>
            <person name="Clee C."/>
            <person name="Cobley V."/>
            <person name="Collier R.E."/>
            <person name="Corby N."/>
            <person name="Coville G.J."/>
            <person name="Davies J."/>
            <person name="Deadman R."/>
            <person name="Dunn M."/>
            <person name="Earthrowl M."/>
            <person name="Ellington A.G."/>
            <person name="Errington H."/>
            <person name="Frankish A."/>
            <person name="Frankland J."/>
            <person name="French L."/>
            <person name="Garner P."/>
            <person name="Garnett J."/>
            <person name="Gay L."/>
            <person name="Ghori M.R.J."/>
            <person name="Gibson R."/>
            <person name="Gilby L.M."/>
            <person name="Gillett W."/>
            <person name="Glithero R.J."/>
            <person name="Grafham D.V."/>
            <person name="Griffiths C."/>
            <person name="Griffiths-Jones S."/>
            <person name="Grocock R."/>
            <person name="Hammond S."/>
            <person name="Harrison E.S.I."/>
            <person name="Hart E."/>
            <person name="Haugen E."/>
            <person name="Heath P.D."/>
            <person name="Holmes S."/>
            <person name="Holt K."/>
            <person name="Howden P.J."/>
            <person name="Hunt A.R."/>
            <person name="Hunt S.E."/>
            <person name="Hunter G."/>
            <person name="Isherwood J."/>
            <person name="James R."/>
            <person name="Johnson C."/>
            <person name="Johnson D."/>
            <person name="Joy A."/>
            <person name="Kay M."/>
            <person name="Kershaw J.K."/>
            <person name="Kibukawa M."/>
            <person name="Kimberley A.M."/>
            <person name="King A."/>
            <person name="Knights A.J."/>
            <person name="Lad H."/>
            <person name="Laird G."/>
            <person name="Lawlor S."/>
            <person name="Leongamornlert D.A."/>
            <person name="Lloyd D.M."/>
            <person name="Loveland J."/>
            <person name="Lovell J."/>
            <person name="Lush M.J."/>
            <person name="Lyne R."/>
            <person name="Martin S."/>
            <person name="Mashreghi-Mohammadi M."/>
            <person name="Matthews L."/>
            <person name="Matthews N.S.W."/>
            <person name="McLaren S."/>
            <person name="Milne S."/>
            <person name="Mistry S."/>
            <person name="Moore M.J.F."/>
            <person name="Nickerson T."/>
            <person name="O'Dell C.N."/>
            <person name="Oliver K."/>
            <person name="Palmeiri A."/>
            <person name="Palmer S.A."/>
            <person name="Parker A."/>
            <person name="Patel D."/>
            <person name="Pearce A.V."/>
            <person name="Peck A.I."/>
            <person name="Pelan S."/>
            <person name="Phelps K."/>
            <person name="Phillimore B.J."/>
            <person name="Plumb R."/>
            <person name="Rajan J."/>
            <person name="Raymond C."/>
            <person name="Rouse G."/>
            <person name="Saenphimmachak C."/>
            <person name="Sehra H.K."/>
            <person name="Sheridan E."/>
            <person name="Shownkeen R."/>
            <person name="Sims S."/>
            <person name="Skuce C.D."/>
            <person name="Smith M."/>
            <person name="Steward C."/>
            <person name="Subramanian S."/>
            <person name="Sycamore N."/>
            <person name="Tracey A."/>
            <person name="Tromans A."/>
            <person name="Van Helmond Z."/>
            <person name="Wall M."/>
            <person name="Wallis J.M."/>
            <person name="White S."/>
            <person name="Whitehead S.L."/>
            <person name="Wilkinson J.E."/>
            <person name="Willey D.L."/>
            <person name="Williams H."/>
            <person name="Wilming L."/>
            <person name="Wray P.W."/>
            <person name="Wu Z."/>
            <person name="Coulson A."/>
            <person name="Vaudin M."/>
            <person name="Sulston J.E."/>
            <person name="Durbin R.M."/>
            <person name="Hubbard T."/>
            <person name="Wooster R."/>
            <person name="Dunham I."/>
            <person name="Carter N.P."/>
            <person name="McVean G."/>
            <person name="Ross M.T."/>
            <person name="Harrow J."/>
            <person name="Olson M.V."/>
            <person name="Beck S."/>
            <person name="Rogers J."/>
            <person name="Bentley D.R."/>
        </authorList>
    </citation>
    <scope>NUCLEOTIDE SEQUENCE [LARGE SCALE GENOMIC DNA]</scope>
</reference>
<reference key="8">
    <citation type="journal article" date="2004" name="Genome Res.">
        <title>The status, quality, and expansion of the NIH full-length cDNA project: the Mammalian Gene Collection (MGC).</title>
        <authorList>
            <consortium name="The MGC Project Team"/>
        </authorList>
    </citation>
    <scope>NUCLEOTIDE SEQUENCE [LARGE SCALE MRNA] (ISOFORM 1)</scope>
    <source>
        <tissue>Colon</tissue>
        <tissue>Ovary</tissue>
    </source>
</reference>
<reference key="9">
    <citation type="journal article" date="1983" name="Nucleic Acids Res.">
        <title>Molecular cloning and nucleotide sequence of a human renin cDNA fragment.</title>
        <authorList>
            <person name="Soubrier F."/>
            <person name="Panthier J.-J."/>
            <person name="Corvol P."/>
            <person name="Rougeon F."/>
        </authorList>
    </citation>
    <scope>NUCLEOTIDE SEQUENCE [MRNA] OF 108-406 (ISOFORM 1)</scope>
</reference>
<reference key="10">
    <citation type="journal article" date="1986" name="Gene">
        <title>Human renin gene of renin-secreting tumor.</title>
        <authorList>
            <person name="Fukamizu A."/>
            <person name="Nishi K."/>
            <person name="Nishimatsu S."/>
            <person name="Miyazaki H."/>
            <person name="Hirose S."/>
            <person name="Murakami K."/>
        </authorList>
    </citation>
    <scope>NUCLEOTIDE SEQUENCE [GENOMIC DNA] OF 1-33</scope>
</reference>
<reference key="11">
    <citation type="journal article" date="1989" name="J. Biol. Chem.">
        <title>Identification of negative and positive regulatory elements in the human renin gene.</title>
        <authorList>
            <person name="Burt D.W."/>
            <person name="Nakamura N."/>
            <person name="Kelley P."/>
            <person name="Dzau V.J."/>
        </authorList>
    </citation>
    <scope>NUCLEOTIDE SEQUENCE [GENOMIC DNA] OF 1-33</scope>
</reference>
<reference key="12">
    <citation type="journal article" date="1986" name="Gene">
        <title>Segmental homology between the promoter region of the human renin gene and the mouse ren1 and ren2 promoter regions.</title>
        <authorList>
            <person name="Soubrier F."/>
            <person name="Panthier J.J."/>
            <person name="Houot A.-M."/>
            <person name="Rougeon F."/>
            <person name="Corvol P."/>
        </authorList>
    </citation>
    <scope>NUCLEOTIDE SEQUENCE [GENOMIC DNA] OF 1-33</scope>
</reference>
<reference key="13">
    <citation type="journal article" date="1991" name="J. Biochem.">
        <title>Isolation and characterization of recombinant human prorenin in Chinese hamster ovary cells.</title>
        <authorList>
            <person name="Ishizuka Y."/>
            <person name="Shoda A."/>
            <person name="Yoshida S."/>
            <person name="Kawamura Y."/>
            <person name="Haraguchi K."/>
            <person name="Murakami K."/>
        </authorList>
    </citation>
    <scope>PROTEIN SEQUENCE OF 24-42 AND 67-86</scope>
</reference>
<reference key="14">
    <citation type="journal article" date="2002" name="J. Clin. Invest.">
        <title>Pivotal role of the renin/prorenin receptor in angiotensin II production and cellular responses to renin.</title>
        <authorList>
            <person name="Nguyen G."/>
            <person name="Delarue F."/>
            <person name="Burckle C."/>
            <person name="Bouzhir L."/>
            <person name="Giller T."/>
            <person name="Sraer J.-D."/>
        </authorList>
    </citation>
    <scope>INTERACTION WITH ATP6AP2</scope>
    <scope>FUNCTION</scope>
    <scope>CATALYTIC ACTIVITY</scope>
    <scope>BIOPHYSICOCHEMICAL PROPERTIES</scope>
    <scope>SUBCELLULAR LOCATION</scope>
    <scope>ACTIVITY REGULATION</scope>
</reference>
<reference key="15">
    <citation type="journal article" date="1989" name="Science">
        <title>Structure of recombinant human renin, a target for cardiovascular-active drugs, at 2.5-A resolution.</title>
        <authorList>
            <person name="Sielecki A.R."/>
            <person name="Hayakawa K."/>
            <person name="Fujinaga M."/>
            <person name="Murphy M.E.P."/>
            <person name="Fraser M."/>
            <person name="Muir A.K."/>
            <person name="Carilli C.T."/>
            <person name="Lewicki J.A."/>
            <person name="Baxter J.D."/>
            <person name="James M.N.G."/>
        </authorList>
    </citation>
    <scope>X-RAY CRYSTALLOGRAPHY (2.5 ANGSTROMS)</scope>
    <scope>GLYCOSYLATION AT ASN-71 AND ASN-141</scope>
</reference>
<reference key="16">
    <citation type="journal article" date="1992" name="Nature">
        <title>X-ray analyses of peptide-inhibitor complexes define the structural basis of specificity for human and mouse renins.</title>
        <authorList>
            <person name="Dhanaraj V."/>
            <person name="Dealwis C.G."/>
            <person name="Frazao C."/>
            <person name="Badasso M."/>
            <person name="Sibanda B.L."/>
            <person name="Tickle I.J."/>
            <person name="Cooper J.B."/>
            <person name="Driessen H.P.C."/>
            <person name="Newman M."/>
            <person name="Aguilar C."/>
            <person name="Wood S.P."/>
            <person name="Blundell T.L."/>
            <person name="Hobart P.M."/>
            <person name="Geoghegan K.F."/>
            <person name="Ammirati M.J."/>
            <person name="Danley D.E."/>
            <person name="O'Connor B.A."/>
            <person name="Hoover D.J."/>
        </authorList>
    </citation>
    <scope>X-RAY CRYSTALLOGRAPHY (2.8 ANGSTROMS)</scope>
</reference>
<reference key="17">
    <citation type="journal article" date="2010" name="Nature">
        <title>A redox switch in angiotensinogen modulates angiotensin release.</title>
        <authorList>
            <person name="Zhou A."/>
            <person name="Carrell R.W."/>
            <person name="Murphy M.P."/>
            <person name="Wei Z."/>
            <person name="Yan Y."/>
            <person name="Stanley P.L."/>
            <person name="Stein P.E."/>
            <person name="Broughton Pipkin F."/>
            <person name="Read R.J."/>
        </authorList>
    </citation>
    <scope>X-RAY CRYSTALLOGRAPHY (4.33 ANGSTROMS) OF 24-406 OF MUTANT ALA-292 IN COMPLEX WITH ANGIOTENSINOGEN</scope>
    <scope>DISULFIDE BONDS</scope>
    <scope>FUNCTION</scope>
    <scope>CATALYTIC ACTIVITY</scope>
</reference>
<reference key="18">
    <citation type="journal article" date="2005" name="Nat. Genet.">
        <title>Mutations in genes in the renin-angiotensin system are associated with autosomal recessive renal tubular dysgenesis.</title>
        <authorList>
            <person name="Gribouval O."/>
            <person name="Gonzales M."/>
            <person name="Neuhaus T."/>
            <person name="Aziza J."/>
            <person name="Bieth E."/>
            <person name="Laurent N."/>
            <person name="Bouton J.M."/>
            <person name="Feuillet F."/>
            <person name="Makni S."/>
            <person name="Ben Amar H."/>
            <person name="Laube G."/>
            <person name="Delezoide A.-L."/>
            <person name="Bouvier R."/>
            <person name="Dijoud F."/>
            <person name="Ollagnon-Roman E."/>
            <person name="Roume J."/>
            <person name="Joubert M."/>
            <person name="Antignac C."/>
            <person name="Gubler M.-C."/>
        </authorList>
    </citation>
    <scope>VARIANTS RTD ASN-104 AND LYS-230</scope>
</reference>
<reference key="19">
    <citation type="journal article" date="2009" name="Am. J. Hum. Genet.">
        <title>Dominant renin gene mutations associated with early-onset hyperuricemia, anemia, and chronic kidney failure.</title>
        <authorList>
            <person name="Zivna M."/>
            <person name="Hulkova H."/>
            <person name="Matignon M."/>
            <person name="Hodanova K."/>
            <person name="Vylet'al P."/>
            <person name="Kalbacova M."/>
            <person name="Baresova V."/>
            <person name="Sikora J."/>
            <person name="Blazkova H."/>
            <person name="Zivny J."/>
            <person name="Ivanek R."/>
            <person name="Stranecky V."/>
            <person name="Sovova J."/>
            <person name="Claes K."/>
            <person name="Lerut E."/>
            <person name="Fryns J.P."/>
            <person name="Hart P.S."/>
            <person name="Hart T.C."/>
            <person name="Adams J.N."/>
            <person name="Pawtowski A."/>
            <person name="Clemessy M."/>
            <person name="Gasc J.M."/>
            <person name="Guebler M.C."/>
            <person name="Antignac C."/>
            <person name="Elleder M."/>
            <person name="Kapp K."/>
            <person name="Grimbert P."/>
            <person name="Bleyer A.J."/>
            <person name="Kmoch S."/>
        </authorList>
    </citation>
    <scope>VARIANT ADTKD4 ARG-16</scope>
    <scope>CHARACTERIZATION OF VARIANT ADTKD4 ARG-16</scope>
</reference>